<dbReference type="EMBL" id="AF010464">
    <property type="protein sequence ID" value="AAB66350.1"/>
    <property type="molecule type" value="mRNA"/>
</dbReference>
<dbReference type="SMR" id="P56478"/>
<dbReference type="FunCoup" id="P56478">
    <property type="interactions" value="183"/>
</dbReference>
<dbReference type="STRING" id="10116.ENSRNOP00000016091"/>
<dbReference type="GlyCosmos" id="P56478">
    <property type="glycosylation" value="2 sites, No reported glycans"/>
</dbReference>
<dbReference type="GlyGen" id="P56478">
    <property type="glycosylation" value="2 sites"/>
</dbReference>
<dbReference type="PaxDb" id="10116-ENSRNOP00000016091"/>
<dbReference type="UCSC" id="RGD:2904">
    <property type="organism name" value="rat"/>
</dbReference>
<dbReference type="AGR" id="RGD:2904"/>
<dbReference type="RGD" id="2904">
    <property type="gene designation" value="Il7"/>
</dbReference>
<dbReference type="eggNOG" id="ENOG502SW6R">
    <property type="taxonomic scope" value="Eukaryota"/>
</dbReference>
<dbReference type="InParanoid" id="P56478"/>
<dbReference type="PhylomeDB" id="P56478"/>
<dbReference type="Reactome" id="R-RNO-1266695">
    <property type="pathway name" value="Interleukin-7 signaling"/>
</dbReference>
<dbReference type="PRO" id="PR:P56478"/>
<dbReference type="Proteomes" id="UP000002494">
    <property type="component" value="Unplaced"/>
</dbReference>
<dbReference type="GO" id="GO:0005576">
    <property type="term" value="C:extracellular region"/>
    <property type="evidence" value="ECO:0000266"/>
    <property type="project" value="RGD"/>
</dbReference>
<dbReference type="GO" id="GO:0005615">
    <property type="term" value="C:extracellular space"/>
    <property type="evidence" value="ECO:0000266"/>
    <property type="project" value="RGD"/>
</dbReference>
<dbReference type="GO" id="GO:0005125">
    <property type="term" value="F:cytokine activity"/>
    <property type="evidence" value="ECO:0000250"/>
    <property type="project" value="UniProtKB"/>
</dbReference>
<dbReference type="GO" id="GO:0008083">
    <property type="term" value="F:growth factor activity"/>
    <property type="evidence" value="ECO:0000250"/>
    <property type="project" value="UniProtKB"/>
</dbReference>
<dbReference type="GO" id="GO:0005139">
    <property type="term" value="F:interleukin-7 receptor binding"/>
    <property type="evidence" value="ECO:0007669"/>
    <property type="project" value="InterPro"/>
</dbReference>
<dbReference type="GO" id="GO:0042100">
    <property type="term" value="P:B cell proliferation"/>
    <property type="evidence" value="ECO:0000266"/>
    <property type="project" value="RGD"/>
</dbReference>
<dbReference type="GO" id="GO:0045453">
    <property type="term" value="P:bone resorption"/>
    <property type="evidence" value="ECO:0000250"/>
    <property type="project" value="UniProtKB"/>
</dbReference>
<dbReference type="GO" id="GO:0071456">
    <property type="term" value="P:cellular response to hypoxia"/>
    <property type="evidence" value="ECO:0000270"/>
    <property type="project" value="RGD"/>
</dbReference>
<dbReference type="GO" id="GO:0019221">
    <property type="term" value="P:cytokine-mediated signaling pathway"/>
    <property type="evidence" value="ECO:0000266"/>
    <property type="project" value="RGD"/>
</dbReference>
<dbReference type="GO" id="GO:0097191">
    <property type="term" value="P:extrinsic apoptotic signaling pathway"/>
    <property type="evidence" value="ECO:0000266"/>
    <property type="project" value="RGD"/>
</dbReference>
<dbReference type="GO" id="GO:0048873">
    <property type="term" value="P:homeostasis of number of cells within a tissue"/>
    <property type="evidence" value="ECO:0000266"/>
    <property type="project" value="RGD"/>
</dbReference>
<dbReference type="GO" id="GO:0006955">
    <property type="term" value="P:immune response"/>
    <property type="evidence" value="ECO:0007669"/>
    <property type="project" value="InterPro"/>
</dbReference>
<dbReference type="GO" id="GO:0038111">
    <property type="term" value="P:interleukin-7-mediated signaling pathway"/>
    <property type="evidence" value="ECO:0000266"/>
    <property type="project" value="RGD"/>
</dbReference>
<dbReference type="GO" id="GO:0043066">
    <property type="term" value="P:negative regulation of apoptotic process"/>
    <property type="evidence" value="ECO:0000250"/>
    <property type="project" value="UniProtKB"/>
</dbReference>
<dbReference type="GO" id="GO:2001237">
    <property type="term" value="P:negative regulation of extrinsic apoptotic signaling pathway"/>
    <property type="evidence" value="ECO:0000266"/>
    <property type="project" value="RGD"/>
</dbReference>
<dbReference type="GO" id="GO:2001240">
    <property type="term" value="P:negative regulation of extrinsic apoptotic signaling pathway in absence of ligand"/>
    <property type="evidence" value="ECO:0000266"/>
    <property type="project" value="RGD"/>
</dbReference>
<dbReference type="GO" id="GO:0035265">
    <property type="term" value="P:organ growth"/>
    <property type="evidence" value="ECO:0000266"/>
    <property type="project" value="RGD"/>
</dbReference>
<dbReference type="GO" id="GO:0045579">
    <property type="term" value="P:positive regulation of B cell differentiation"/>
    <property type="evidence" value="ECO:0000266"/>
    <property type="project" value="RGD"/>
</dbReference>
<dbReference type="GO" id="GO:0030890">
    <property type="term" value="P:positive regulation of B cell proliferation"/>
    <property type="evidence" value="ECO:0000250"/>
    <property type="project" value="UniProtKB"/>
</dbReference>
<dbReference type="GO" id="GO:0032722">
    <property type="term" value="P:positive regulation of chemokine production"/>
    <property type="evidence" value="ECO:0000266"/>
    <property type="project" value="RGD"/>
</dbReference>
<dbReference type="GO" id="GO:0001961">
    <property type="term" value="P:positive regulation of cytokine-mediated signaling pathway"/>
    <property type="evidence" value="ECO:0000266"/>
    <property type="project" value="RGD"/>
</dbReference>
<dbReference type="GO" id="GO:0010628">
    <property type="term" value="P:positive regulation of gene expression"/>
    <property type="evidence" value="ECO:0000266"/>
    <property type="project" value="RGD"/>
</dbReference>
<dbReference type="GO" id="GO:0046622">
    <property type="term" value="P:positive regulation of organ growth"/>
    <property type="evidence" value="ECO:0000266"/>
    <property type="project" value="RGD"/>
</dbReference>
<dbReference type="GO" id="GO:0045582">
    <property type="term" value="P:positive regulation of T cell differentiation"/>
    <property type="evidence" value="ECO:0000250"/>
    <property type="project" value="UniProtKB"/>
</dbReference>
<dbReference type="GO" id="GO:0010468">
    <property type="term" value="P:regulation of gene expression"/>
    <property type="evidence" value="ECO:0000266"/>
    <property type="project" value="RGD"/>
</dbReference>
<dbReference type="GO" id="GO:0010165">
    <property type="term" value="P:response to X-ray"/>
    <property type="evidence" value="ECO:0000270"/>
    <property type="project" value="RGD"/>
</dbReference>
<dbReference type="GO" id="GO:0002360">
    <property type="term" value="P:T cell lineage commitment"/>
    <property type="evidence" value="ECO:0000266"/>
    <property type="project" value="RGD"/>
</dbReference>
<dbReference type="FunFam" id="1.20.1250.50:FF:000001">
    <property type="entry name" value="Interleukin-7"/>
    <property type="match status" value="1"/>
</dbReference>
<dbReference type="Gene3D" id="1.20.1250.50">
    <property type="match status" value="1"/>
</dbReference>
<dbReference type="InterPro" id="IPR001181">
    <property type="entry name" value="IL-7"/>
</dbReference>
<dbReference type="InterPro" id="IPR018049">
    <property type="entry name" value="IL-7/IL-9_CS"/>
</dbReference>
<dbReference type="InterPro" id="IPR038325">
    <property type="entry name" value="IL7_sf"/>
</dbReference>
<dbReference type="PANTHER" id="PTHR48492">
    <property type="entry name" value="INTERLEUKIN-7"/>
    <property type="match status" value="1"/>
</dbReference>
<dbReference type="PANTHER" id="PTHR48492:SF1">
    <property type="entry name" value="INTERLEUKIN-7"/>
    <property type="match status" value="1"/>
</dbReference>
<dbReference type="Pfam" id="PF01415">
    <property type="entry name" value="IL7"/>
    <property type="match status" value="1"/>
</dbReference>
<dbReference type="PIRSF" id="PIRSF001942">
    <property type="entry name" value="IL-7"/>
    <property type="match status" value="1"/>
</dbReference>
<dbReference type="PRINTS" id="PR00435">
    <property type="entry name" value="INTERLEUKIN7"/>
</dbReference>
<dbReference type="SMART" id="SM00127">
    <property type="entry name" value="IL7"/>
    <property type="match status" value="1"/>
</dbReference>
<dbReference type="PROSITE" id="PS00255">
    <property type="entry name" value="INTERLEUKIN_7_9"/>
    <property type="match status" value="1"/>
</dbReference>
<reference key="1">
    <citation type="submission" date="1997-08" db="EMBL/GenBank/DDBJ databases">
        <authorList>
            <person name="Widegren B."/>
            <person name="Visse E."/>
            <person name="Sjogren H.O."/>
        </authorList>
    </citation>
    <scope>NUCLEOTIDE SEQUENCE [MRNA]</scope>
    <source>
        <strain>Fischer</strain>
    </source>
</reference>
<gene>
    <name type="primary">Il7</name>
</gene>
<keyword id="KW-0202">Cytokine</keyword>
<keyword id="KW-1015">Disulfide bond</keyword>
<keyword id="KW-0325">Glycoprotein</keyword>
<keyword id="KW-0339">Growth factor</keyword>
<keyword id="KW-1185">Reference proteome</keyword>
<keyword id="KW-0964">Secreted</keyword>
<keyword id="KW-0732">Signal</keyword>
<comment type="function">
    <text evidence="2">Hematopoietic cytokine that plays an essential role in the development, expansion, and survival of naive and memory T-cells and B-cells thereby regulating the number of mature lymphocytes and maintaining lymphoid homeostasis. Mechanistically, exerts its biological effects through a receptor composed of IL7RA subunit and the cytokine receptor common subunit gamma/CSF2RG. Binding to the receptor leads to activation of various kinases including JAK1 or JAK3 depending on the cell type and subsequently propagation of signals through activation of several downstream signaling pathways including the PI3K/Akt/mTOR or the JAK-STAT5.</text>
</comment>
<comment type="subunit">
    <text evidence="2">Interacts with IL7R and CSF2RG.</text>
</comment>
<comment type="subcellular location">
    <subcellularLocation>
        <location evidence="2">Secreted</location>
    </subcellularLocation>
</comment>
<comment type="PTM">
    <text evidence="4">Three disulfide bonds are present.</text>
</comment>
<comment type="similarity">
    <text evidence="4">Belongs to the IL-7/IL-9 family.</text>
</comment>
<proteinExistence type="evidence at transcript level"/>
<name>IL7_RAT</name>
<protein>
    <recommendedName>
        <fullName>Interleukin-7</fullName>
        <shortName>IL-7</shortName>
    </recommendedName>
</protein>
<accession>P56478</accession>
<feature type="signal peptide" evidence="1">
    <location>
        <begin position="1"/>
        <end position="25"/>
    </location>
</feature>
<feature type="chain" id="PRO_0000015625" description="Interleukin-7">
    <location>
        <begin position="26"/>
        <end position="154"/>
    </location>
</feature>
<feature type="glycosylation site" description="N-linked (GlcNAc...) asparagine" evidence="3">
    <location>
        <position position="94"/>
    </location>
</feature>
<feature type="glycosylation site" description="N-linked (GlcNAc...) asparagine" evidence="3">
    <location>
        <position position="115"/>
    </location>
</feature>
<feature type="disulfide bond" evidence="2">
    <location>
        <begin position="27"/>
        <end position="145"/>
    </location>
</feature>
<feature type="disulfide bond" evidence="2">
    <location>
        <begin position="58"/>
        <end position="133"/>
    </location>
</feature>
<feature type="disulfide bond" evidence="2">
    <location>
        <begin position="71"/>
        <end position="116"/>
    </location>
</feature>
<sequence>MFHVSFRYIFGIPPLILVLLPVTSSDCHIKDKDGKAFGSVLMISINQLDKMTGTDSDCPNNEPNFFKKHLCDDTKEAAFLNRAARKLRQFLKMNISEEFNDHLLRVSDGTQTLVNCTSKEEKTIKEQKKNDPCFLKRLLREIKTCWNKILKGSI</sequence>
<organism>
    <name type="scientific">Rattus norvegicus</name>
    <name type="common">Rat</name>
    <dbReference type="NCBI Taxonomy" id="10116"/>
    <lineage>
        <taxon>Eukaryota</taxon>
        <taxon>Metazoa</taxon>
        <taxon>Chordata</taxon>
        <taxon>Craniata</taxon>
        <taxon>Vertebrata</taxon>
        <taxon>Euteleostomi</taxon>
        <taxon>Mammalia</taxon>
        <taxon>Eutheria</taxon>
        <taxon>Euarchontoglires</taxon>
        <taxon>Glires</taxon>
        <taxon>Rodentia</taxon>
        <taxon>Myomorpha</taxon>
        <taxon>Muroidea</taxon>
        <taxon>Muridae</taxon>
        <taxon>Murinae</taxon>
        <taxon>Rattus</taxon>
    </lineage>
</organism>
<evidence type="ECO:0000250" key="1"/>
<evidence type="ECO:0000250" key="2">
    <source>
        <dbReference type="UniProtKB" id="P13232"/>
    </source>
</evidence>
<evidence type="ECO:0000255" key="3"/>
<evidence type="ECO:0000305" key="4"/>